<reference key="1">
    <citation type="journal article" date="2004" name="Nucleic Acids Res.">
        <title>Genome sequence of Symbiobacterium thermophilum, an uncultivable bacterium that depends on microbial commensalism.</title>
        <authorList>
            <person name="Ueda K."/>
            <person name="Yamashita A."/>
            <person name="Ishikawa J."/>
            <person name="Shimada M."/>
            <person name="Watsuji T."/>
            <person name="Morimura K."/>
            <person name="Ikeda H."/>
            <person name="Hattori M."/>
            <person name="Beppu T."/>
        </authorList>
    </citation>
    <scope>NUCLEOTIDE SEQUENCE [LARGE SCALE GENOMIC DNA]</scope>
    <source>
        <strain>DSM 24528 / JCM 14929 / IAM 14863 / T</strain>
    </source>
</reference>
<comment type="function">
    <text evidence="1">Channel that opens in response to stretch forces in the membrane lipid bilayer. May participate in the regulation of osmotic pressure changes within the cell.</text>
</comment>
<comment type="subunit">
    <text evidence="1">Homopentamer.</text>
</comment>
<comment type="subcellular location">
    <subcellularLocation>
        <location evidence="1">Cell membrane</location>
        <topology evidence="1">Multi-pass membrane protein</topology>
    </subcellularLocation>
</comment>
<comment type="similarity">
    <text evidence="1">Belongs to the MscL family.</text>
</comment>
<sequence>MLSEFKRFALRGNVLDLAVGVVIGAAFNQIVNSLVNDVIMPPLGFLVGKMDFSNLYLNLSLTPYASLAEAREAGAPVIAYGLFLNNLLNFLIVAFAVFLLVRQVNRWRPTPPPEPPKTKECPYCLSTVPVKATRCAHCTSDLTAES</sequence>
<evidence type="ECO:0000255" key="1">
    <source>
        <dbReference type="HAMAP-Rule" id="MF_00115"/>
    </source>
</evidence>
<dbReference type="EMBL" id="AP006840">
    <property type="protein sequence ID" value="BAD40376.1"/>
    <property type="molecule type" value="Genomic_DNA"/>
</dbReference>
<dbReference type="RefSeq" id="WP_011195521.1">
    <property type="nucleotide sequence ID" value="NC_006177.1"/>
</dbReference>
<dbReference type="STRING" id="292459.STH1391"/>
<dbReference type="KEGG" id="sth:STH1391"/>
<dbReference type="eggNOG" id="COG1970">
    <property type="taxonomic scope" value="Bacteria"/>
</dbReference>
<dbReference type="HOGENOM" id="CLU_095787_2_3_9"/>
<dbReference type="OrthoDB" id="9810350at2"/>
<dbReference type="Proteomes" id="UP000000417">
    <property type="component" value="Chromosome"/>
</dbReference>
<dbReference type="GO" id="GO:0005886">
    <property type="term" value="C:plasma membrane"/>
    <property type="evidence" value="ECO:0007669"/>
    <property type="project" value="UniProtKB-SubCell"/>
</dbReference>
<dbReference type="GO" id="GO:0008381">
    <property type="term" value="F:mechanosensitive monoatomic ion channel activity"/>
    <property type="evidence" value="ECO:0007669"/>
    <property type="project" value="UniProtKB-UniRule"/>
</dbReference>
<dbReference type="Gene3D" id="1.10.1200.120">
    <property type="entry name" value="Large-conductance mechanosensitive channel, MscL, domain 1"/>
    <property type="match status" value="1"/>
</dbReference>
<dbReference type="HAMAP" id="MF_00115">
    <property type="entry name" value="MscL"/>
    <property type="match status" value="1"/>
</dbReference>
<dbReference type="InterPro" id="IPR019823">
    <property type="entry name" value="Mechanosensitive_channel_CS"/>
</dbReference>
<dbReference type="InterPro" id="IPR001185">
    <property type="entry name" value="MS_channel"/>
</dbReference>
<dbReference type="InterPro" id="IPR037673">
    <property type="entry name" value="MSC/AndL"/>
</dbReference>
<dbReference type="InterPro" id="IPR036019">
    <property type="entry name" value="MscL_channel"/>
</dbReference>
<dbReference type="NCBIfam" id="TIGR00220">
    <property type="entry name" value="mscL"/>
    <property type="match status" value="1"/>
</dbReference>
<dbReference type="PANTHER" id="PTHR30266:SF2">
    <property type="entry name" value="LARGE-CONDUCTANCE MECHANOSENSITIVE CHANNEL"/>
    <property type="match status" value="1"/>
</dbReference>
<dbReference type="PANTHER" id="PTHR30266">
    <property type="entry name" value="MECHANOSENSITIVE CHANNEL MSCL"/>
    <property type="match status" value="1"/>
</dbReference>
<dbReference type="Pfam" id="PF01741">
    <property type="entry name" value="MscL"/>
    <property type="match status" value="1"/>
</dbReference>
<dbReference type="PRINTS" id="PR01264">
    <property type="entry name" value="MECHCHANNEL"/>
</dbReference>
<dbReference type="SUPFAM" id="SSF81330">
    <property type="entry name" value="Gated mechanosensitive channel"/>
    <property type="match status" value="1"/>
</dbReference>
<dbReference type="PROSITE" id="PS01327">
    <property type="entry name" value="MSCL"/>
    <property type="match status" value="1"/>
</dbReference>
<gene>
    <name evidence="1" type="primary">mscL</name>
    <name type="ordered locus">STH1391</name>
</gene>
<keyword id="KW-1003">Cell membrane</keyword>
<keyword id="KW-0407">Ion channel</keyword>
<keyword id="KW-0406">Ion transport</keyword>
<keyword id="KW-0472">Membrane</keyword>
<keyword id="KW-1185">Reference proteome</keyword>
<keyword id="KW-0812">Transmembrane</keyword>
<keyword id="KW-1133">Transmembrane helix</keyword>
<keyword id="KW-0813">Transport</keyword>
<proteinExistence type="inferred from homology"/>
<feature type="chain" id="PRO_0000238042" description="Large-conductance mechanosensitive channel">
    <location>
        <begin position="1"/>
        <end position="146"/>
    </location>
</feature>
<feature type="transmembrane region" description="Helical" evidence="1">
    <location>
        <begin position="14"/>
        <end position="34"/>
    </location>
</feature>
<feature type="transmembrane region" description="Helical" evidence="1">
    <location>
        <begin position="81"/>
        <end position="101"/>
    </location>
</feature>
<accession>Q67PL7</accession>
<name>MSCL_SYMTH</name>
<protein>
    <recommendedName>
        <fullName evidence="1">Large-conductance mechanosensitive channel</fullName>
    </recommendedName>
</protein>
<organism>
    <name type="scientific">Symbiobacterium thermophilum (strain DSM 24528 / JCM 14929 / IAM 14863 / T)</name>
    <dbReference type="NCBI Taxonomy" id="292459"/>
    <lineage>
        <taxon>Bacteria</taxon>
        <taxon>Bacillati</taxon>
        <taxon>Bacillota</taxon>
        <taxon>Clostridia</taxon>
        <taxon>Eubacteriales</taxon>
        <taxon>Symbiobacteriaceae</taxon>
        <taxon>Symbiobacterium</taxon>
    </lineage>
</organism>